<organism>
    <name type="scientific">Chloroflexus aurantiacus (strain ATCC 29364 / DSM 637 / Y-400-fl)</name>
    <dbReference type="NCBI Taxonomy" id="480224"/>
    <lineage>
        <taxon>Bacteria</taxon>
        <taxon>Bacillati</taxon>
        <taxon>Chloroflexota</taxon>
        <taxon>Chloroflexia</taxon>
        <taxon>Chloroflexales</taxon>
        <taxon>Chloroflexineae</taxon>
        <taxon>Chloroflexaceae</taxon>
        <taxon>Chloroflexus</taxon>
    </lineage>
</organism>
<name>RS3_CHLSY</name>
<sequence>MGRKVHPIGFRLGYIKDWQSKWFAEGEEYTRQLHEDIELRKLISKELQSAGVSRIEIERSANKIEISVYTAKPGIVIGKRGTNVDTLKSALERKTGKKIKLNIKEIHQPELDAQLVAESIGEQITRRVSYKRAMKQAVQRAMRLGAQGVKVRCSGRLGGAEMSRVHEEAEGRVPRHTLRADIDYAQVHAHTTYGRIGVKVWIYKGEVFPNQVAKSPAEPATTAPTPAPERRERQPRRNSNASA</sequence>
<accession>B9LJD8</accession>
<evidence type="ECO:0000255" key="1">
    <source>
        <dbReference type="HAMAP-Rule" id="MF_01309"/>
    </source>
</evidence>
<evidence type="ECO:0000256" key="2">
    <source>
        <dbReference type="SAM" id="MobiDB-lite"/>
    </source>
</evidence>
<evidence type="ECO:0000305" key="3"/>
<proteinExistence type="inferred from homology"/>
<comment type="function">
    <text evidence="1">Binds the lower part of the 30S subunit head. Binds mRNA in the 70S ribosome, positioning it for translation.</text>
</comment>
<comment type="subunit">
    <text evidence="1">Part of the 30S ribosomal subunit. Forms a tight complex with proteins S10 and S14.</text>
</comment>
<comment type="similarity">
    <text evidence="1">Belongs to the universal ribosomal protein uS3 family.</text>
</comment>
<feature type="chain" id="PRO_1000165487" description="Small ribosomal subunit protein uS3">
    <location>
        <begin position="1"/>
        <end position="243"/>
    </location>
</feature>
<feature type="domain" description="KH type-2" evidence="1">
    <location>
        <begin position="39"/>
        <end position="107"/>
    </location>
</feature>
<feature type="region of interest" description="Disordered" evidence="2">
    <location>
        <begin position="212"/>
        <end position="243"/>
    </location>
</feature>
<dbReference type="EMBL" id="CP001364">
    <property type="protein sequence ID" value="ACM53954.1"/>
    <property type="molecule type" value="Genomic_DNA"/>
</dbReference>
<dbReference type="SMR" id="B9LJD8"/>
<dbReference type="KEGG" id="chl:Chy400_2562"/>
<dbReference type="HOGENOM" id="CLU_058591_0_2_0"/>
<dbReference type="OrthoDB" id="9806396at2"/>
<dbReference type="GO" id="GO:0022627">
    <property type="term" value="C:cytosolic small ribosomal subunit"/>
    <property type="evidence" value="ECO:0007669"/>
    <property type="project" value="TreeGrafter"/>
</dbReference>
<dbReference type="GO" id="GO:0003729">
    <property type="term" value="F:mRNA binding"/>
    <property type="evidence" value="ECO:0007669"/>
    <property type="project" value="UniProtKB-UniRule"/>
</dbReference>
<dbReference type="GO" id="GO:0019843">
    <property type="term" value="F:rRNA binding"/>
    <property type="evidence" value="ECO:0007669"/>
    <property type="project" value="UniProtKB-UniRule"/>
</dbReference>
<dbReference type="GO" id="GO:0003735">
    <property type="term" value="F:structural constituent of ribosome"/>
    <property type="evidence" value="ECO:0007669"/>
    <property type="project" value="InterPro"/>
</dbReference>
<dbReference type="GO" id="GO:0006412">
    <property type="term" value="P:translation"/>
    <property type="evidence" value="ECO:0007669"/>
    <property type="project" value="UniProtKB-UniRule"/>
</dbReference>
<dbReference type="CDD" id="cd02412">
    <property type="entry name" value="KH-II_30S_S3"/>
    <property type="match status" value="1"/>
</dbReference>
<dbReference type="FunFam" id="3.30.1140.32:FF:000014">
    <property type="entry name" value="30S ribosomal protein S3"/>
    <property type="match status" value="1"/>
</dbReference>
<dbReference type="FunFam" id="3.30.300.20:FF:000001">
    <property type="entry name" value="30S ribosomal protein S3"/>
    <property type="match status" value="1"/>
</dbReference>
<dbReference type="Gene3D" id="3.30.300.20">
    <property type="match status" value="1"/>
</dbReference>
<dbReference type="Gene3D" id="3.30.1140.32">
    <property type="entry name" value="Ribosomal protein S3, C-terminal domain"/>
    <property type="match status" value="1"/>
</dbReference>
<dbReference type="HAMAP" id="MF_01309_B">
    <property type="entry name" value="Ribosomal_uS3_B"/>
    <property type="match status" value="1"/>
</dbReference>
<dbReference type="InterPro" id="IPR004087">
    <property type="entry name" value="KH_dom"/>
</dbReference>
<dbReference type="InterPro" id="IPR015946">
    <property type="entry name" value="KH_dom-like_a/b"/>
</dbReference>
<dbReference type="InterPro" id="IPR004044">
    <property type="entry name" value="KH_dom_type_2"/>
</dbReference>
<dbReference type="InterPro" id="IPR009019">
    <property type="entry name" value="KH_sf_prok-type"/>
</dbReference>
<dbReference type="InterPro" id="IPR036419">
    <property type="entry name" value="Ribosomal_S3_C_sf"/>
</dbReference>
<dbReference type="InterPro" id="IPR005704">
    <property type="entry name" value="Ribosomal_uS3_bac-typ"/>
</dbReference>
<dbReference type="InterPro" id="IPR001351">
    <property type="entry name" value="Ribosomal_uS3_C"/>
</dbReference>
<dbReference type="InterPro" id="IPR018280">
    <property type="entry name" value="Ribosomal_uS3_CS"/>
</dbReference>
<dbReference type="NCBIfam" id="TIGR01009">
    <property type="entry name" value="rpsC_bact"/>
    <property type="match status" value="1"/>
</dbReference>
<dbReference type="PANTHER" id="PTHR11760">
    <property type="entry name" value="30S/40S RIBOSOMAL PROTEIN S3"/>
    <property type="match status" value="1"/>
</dbReference>
<dbReference type="PANTHER" id="PTHR11760:SF19">
    <property type="entry name" value="SMALL RIBOSOMAL SUBUNIT PROTEIN US3C"/>
    <property type="match status" value="1"/>
</dbReference>
<dbReference type="Pfam" id="PF07650">
    <property type="entry name" value="KH_2"/>
    <property type="match status" value="1"/>
</dbReference>
<dbReference type="Pfam" id="PF00189">
    <property type="entry name" value="Ribosomal_S3_C"/>
    <property type="match status" value="1"/>
</dbReference>
<dbReference type="SMART" id="SM00322">
    <property type="entry name" value="KH"/>
    <property type="match status" value="1"/>
</dbReference>
<dbReference type="SUPFAM" id="SSF54814">
    <property type="entry name" value="Prokaryotic type KH domain (KH-domain type II)"/>
    <property type="match status" value="1"/>
</dbReference>
<dbReference type="SUPFAM" id="SSF54821">
    <property type="entry name" value="Ribosomal protein S3 C-terminal domain"/>
    <property type="match status" value="1"/>
</dbReference>
<dbReference type="PROSITE" id="PS50823">
    <property type="entry name" value="KH_TYPE_2"/>
    <property type="match status" value="1"/>
</dbReference>
<dbReference type="PROSITE" id="PS00548">
    <property type="entry name" value="RIBOSOMAL_S3"/>
    <property type="match status" value="1"/>
</dbReference>
<keyword id="KW-0687">Ribonucleoprotein</keyword>
<keyword id="KW-0689">Ribosomal protein</keyword>
<keyword id="KW-0694">RNA-binding</keyword>
<keyword id="KW-0699">rRNA-binding</keyword>
<protein>
    <recommendedName>
        <fullName evidence="1">Small ribosomal subunit protein uS3</fullName>
    </recommendedName>
    <alternativeName>
        <fullName evidence="3">30S ribosomal protein S3</fullName>
    </alternativeName>
</protein>
<gene>
    <name evidence="1" type="primary">rpsC</name>
    <name type="ordered locus">Chy400_2562</name>
</gene>
<reference key="1">
    <citation type="submission" date="2009-01" db="EMBL/GenBank/DDBJ databases">
        <title>Complete sequence of Chloroflexus sp. Y-400-fl.</title>
        <authorList>
            <consortium name="US DOE Joint Genome Institute"/>
            <person name="Lucas S."/>
            <person name="Copeland A."/>
            <person name="Lapidus A."/>
            <person name="Glavina del Rio T."/>
            <person name="Dalin E."/>
            <person name="Tice H."/>
            <person name="Bruce D."/>
            <person name="Goodwin L."/>
            <person name="Pitluck S."/>
            <person name="Sims D."/>
            <person name="Kiss H."/>
            <person name="Brettin T."/>
            <person name="Detter J.C."/>
            <person name="Han C."/>
            <person name="Larimer F."/>
            <person name="Land M."/>
            <person name="Hauser L."/>
            <person name="Kyrpides N."/>
            <person name="Ovchinnikova G."/>
            <person name="Bryant D.A."/>
            <person name="Richardson P."/>
        </authorList>
    </citation>
    <scope>NUCLEOTIDE SEQUENCE [LARGE SCALE GENOMIC DNA]</scope>
    <source>
        <strain>ATCC 29364 / DSM 637 / Y-400-fl</strain>
    </source>
</reference>